<keyword id="KW-0653">Protein transport</keyword>
<keyword id="KW-1185">Reference proteome</keyword>
<keyword id="KW-0694">RNA-binding</keyword>
<keyword id="KW-0813">Transport</keyword>
<protein>
    <recommendedName>
        <fullName evidence="1">Nascent polypeptide-associated complex protein</fullName>
    </recommendedName>
</protein>
<comment type="function">
    <text evidence="1">Contacts the emerging nascent chain on the ribosome.</text>
</comment>
<comment type="subunit">
    <text evidence="1">Homodimer. Interacts with the ribosome. Binds ribosomal RNA.</text>
</comment>
<comment type="similarity">
    <text evidence="1">Belongs to the NAC-alpha family.</text>
</comment>
<sequence length="116" mass="13088">MPKFNPKQMKDLERMLGLKTEQLNAVKVTIELQDKILVIDNPVVVKMLAQGQEVFSVMGSAREESKQQQKVEIKEEDVKFIMEQTGKSEKEAREALEKSNGDIAKAILALTEGENK</sequence>
<proteinExistence type="inferred from homology"/>
<dbReference type="EMBL" id="CP000077">
    <property type="protein sequence ID" value="AAY81640.1"/>
    <property type="molecule type" value="Genomic_DNA"/>
</dbReference>
<dbReference type="RefSeq" id="WP_011279142.1">
    <property type="nucleotide sequence ID" value="NC_007181.1"/>
</dbReference>
<dbReference type="SMR" id="Q4J6D8"/>
<dbReference type="STRING" id="330779.Saci_2361"/>
<dbReference type="GeneID" id="14552869"/>
<dbReference type="KEGG" id="sai:Saci_2361"/>
<dbReference type="PATRIC" id="fig|330779.12.peg.2367"/>
<dbReference type="eggNOG" id="arCOG04061">
    <property type="taxonomic scope" value="Archaea"/>
</dbReference>
<dbReference type="HOGENOM" id="CLU_146475_1_0_2"/>
<dbReference type="Proteomes" id="UP000001018">
    <property type="component" value="Chromosome"/>
</dbReference>
<dbReference type="GO" id="GO:0003723">
    <property type="term" value="F:RNA binding"/>
    <property type="evidence" value="ECO:0007669"/>
    <property type="project" value="UniProtKB-UniRule"/>
</dbReference>
<dbReference type="GO" id="GO:0015031">
    <property type="term" value="P:protein transport"/>
    <property type="evidence" value="ECO:0007669"/>
    <property type="project" value="UniProtKB-UniRule"/>
</dbReference>
<dbReference type="CDD" id="cd14359">
    <property type="entry name" value="UBA_AeNAC"/>
    <property type="match status" value="1"/>
</dbReference>
<dbReference type="Gene3D" id="1.10.8.10">
    <property type="entry name" value="DNA helicase RuvA subunit, C-terminal domain"/>
    <property type="match status" value="1"/>
</dbReference>
<dbReference type="Gene3D" id="2.20.70.30">
    <property type="entry name" value="Nascent polypeptide-associated complex domain"/>
    <property type="match status" value="1"/>
</dbReference>
<dbReference type="HAMAP" id="MF_00814">
    <property type="entry name" value="NAC_arch"/>
    <property type="match status" value="1"/>
</dbReference>
<dbReference type="InterPro" id="IPR044034">
    <property type="entry name" value="NAC-like_UBA"/>
</dbReference>
<dbReference type="InterPro" id="IPR038187">
    <property type="entry name" value="NAC_A/B_dom_sf"/>
</dbReference>
<dbReference type="InterPro" id="IPR005231">
    <property type="entry name" value="NAC_arc"/>
</dbReference>
<dbReference type="InterPro" id="IPR002715">
    <property type="entry name" value="Nas_poly-pep-assoc_cplx_dom"/>
</dbReference>
<dbReference type="InterPro" id="IPR009060">
    <property type="entry name" value="UBA-like_sf"/>
</dbReference>
<dbReference type="NCBIfam" id="TIGR00264">
    <property type="entry name" value="archaeal-type nascent polypeptide-associated complex protein"/>
    <property type="match status" value="1"/>
</dbReference>
<dbReference type="Pfam" id="PF01849">
    <property type="entry name" value="NAC"/>
    <property type="match status" value="1"/>
</dbReference>
<dbReference type="Pfam" id="PF19026">
    <property type="entry name" value="UBA_HYPK"/>
    <property type="match status" value="1"/>
</dbReference>
<dbReference type="SMART" id="SM01407">
    <property type="entry name" value="NAC"/>
    <property type="match status" value="1"/>
</dbReference>
<dbReference type="SUPFAM" id="SSF46934">
    <property type="entry name" value="UBA-like"/>
    <property type="match status" value="1"/>
</dbReference>
<dbReference type="PROSITE" id="PS51151">
    <property type="entry name" value="NAC_AB"/>
    <property type="match status" value="1"/>
</dbReference>
<gene>
    <name evidence="1" type="primary">nac</name>
    <name type="ordered locus">Saci_2361</name>
</gene>
<name>NAC_SULAC</name>
<reference key="1">
    <citation type="journal article" date="2005" name="J. Bacteriol.">
        <title>The genome of Sulfolobus acidocaldarius, a model organism of the Crenarchaeota.</title>
        <authorList>
            <person name="Chen L."/>
            <person name="Bruegger K."/>
            <person name="Skovgaard M."/>
            <person name="Redder P."/>
            <person name="She Q."/>
            <person name="Torarinsson E."/>
            <person name="Greve B."/>
            <person name="Awayez M."/>
            <person name="Zibat A."/>
            <person name="Klenk H.-P."/>
            <person name="Garrett R.A."/>
        </authorList>
    </citation>
    <scope>NUCLEOTIDE SEQUENCE [LARGE SCALE GENOMIC DNA]</scope>
    <source>
        <strain>ATCC 33909 / DSM 639 / JCM 8929 / NBRC 15157 / NCIMB 11770</strain>
    </source>
</reference>
<organism>
    <name type="scientific">Sulfolobus acidocaldarius (strain ATCC 33909 / DSM 639 / JCM 8929 / NBRC 15157 / NCIMB 11770)</name>
    <dbReference type="NCBI Taxonomy" id="330779"/>
    <lineage>
        <taxon>Archaea</taxon>
        <taxon>Thermoproteota</taxon>
        <taxon>Thermoprotei</taxon>
        <taxon>Sulfolobales</taxon>
        <taxon>Sulfolobaceae</taxon>
        <taxon>Sulfolobus</taxon>
    </lineage>
</organism>
<feature type="chain" id="PRO_0000135611" description="Nascent polypeptide-associated complex protein">
    <location>
        <begin position="1"/>
        <end position="116"/>
    </location>
</feature>
<feature type="domain" description="NAC-A/B" evidence="1">
    <location>
        <begin position="6"/>
        <end position="70"/>
    </location>
</feature>
<evidence type="ECO:0000255" key="1">
    <source>
        <dbReference type="HAMAP-Rule" id="MF_00814"/>
    </source>
</evidence>
<accession>Q4J6D8</accession>